<accession>Q5Z0W8</accession>
<protein>
    <recommendedName>
        <fullName evidence="1">1,4-alpha-glucan branching enzyme GlgB</fullName>
        <ecNumber evidence="1">2.4.1.18</ecNumber>
    </recommendedName>
    <alternativeName>
        <fullName evidence="1">1,4-alpha-D-glucan:1,4-alpha-D-glucan 6-glucosyl-transferase</fullName>
    </alternativeName>
    <alternativeName>
        <fullName evidence="1">Alpha-(1-&gt;4)-glucan branching enzyme</fullName>
    </alternativeName>
    <alternativeName>
        <fullName evidence="1">Glycogen branching enzyme</fullName>
        <shortName evidence="1">BE</shortName>
    </alternativeName>
</protein>
<name>GLGB_NOCFA</name>
<dbReference type="EC" id="2.4.1.18" evidence="1"/>
<dbReference type="EMBL" id="AP006618">
    <property type="protein sequence ID" value="BAD55923.1"/>
    <property type="molecule type" value="Genomic_DNA"/>
</dbReference>
<dbReference type="RefSeq" id="WP_011207608.1">
    <property type="nucleotide sequence ID" value="NC_006361.1"/>
</dbReference>
<dbReference type="SMR" id="Q5Z0W8"/>
<dbReference type="STRING" id="247156.NFA_10780"/>
<dbReference type="CAZy" id="CBM48">
    <property type="family name" value="Carbohydrate-Binding Module Family 48"/>
</dbReference>
<dbReference type="CAZy" id="GH13">
    <property type="family name" value="Glycoside Hydrolase Family 13"/>
</dbReference>
<dbReference type="GeneID" id="61131903"/>
<dbReference type="KEGG" id="nfa:NFA_10780"/>
<dbReference type="eggNOG" id="COG0296">
    <property type="taxonomic scope" value="Bacteria"/>
</dbReference>
<dbReference type="HOGENOM" id="CLU_004245_3_2_11"/>
<dbReference type="UniPathway" id="UPA00164"/>
<dbReference type="Proteomes" id="UP000006820">
    <property type="component" value="Chromosome"/>
</dbReference>
<dbReference type="GO" id="GO:0005829">
    <property type="term" value="C:cytosol"/>
    <property type="evidence" value="ECO:0007669"/>
    <property type="project" value="TreeGrafter"/>
</dbReference>
<dbReference type="GO" id="GO:0003844">
    <property type="term" value="F:1,4-alpha-glucan branching enzyme activity"/>
    <property type="evidence" value="ECO:0007669"/>
    <property type="project" value="UniProtKB-UniRule"/>
</dbReference>
<dbReference type="GO" id="GO:0043169">
    <property type="term" value="F:cation binding"/>
    <property type="evidence" value="ECO:0007669"/>
    <property type="project" value="InterPro"/>
</dbReference>
<dbReference type="GO" id="GO:0004553">
    <property type="term" value="F:hydrolase activity, hydrolyzing O-glycosyl compounds"/>
    <property type="evidence" value="ECO:0007669"/>
    <property type="project" value="InterPro"/>
</dbReference>
<dbReference type="GO" id="GO:0005978">
    <property type="term" value="P:glycogen biosynthetic process"/>
    <property type="evidence" value="ECO:0007669"/>
    <property type="project" value="UniProtKB-UniRule"/>
</dbReference>
<dbReference type="CDD" id="cd11322">
    <property type="entry name" value="AmyAc_Glg_BE"/>
    <property type="match status" value="1"/>
</dbReference>
<dbReference type="CDD" id="cd02855">
    <property type="entry name" value="E_set_GBE_prok_N"/>
    <property type="match status" value="1"/>
</dbReference>
<dbReference type="FunFam" id="2.60.40.10:FF:000169">
    <property type="entry name" value="1,4-alpha-glucan branching enzyme GlgB"/>
    <property type="match status" value="1"/>
</dbReference>
<dbReference type="FunFam" id="2.60.40.1180:FF:000002">
    <property type="entry name" value="1,4-alpha-glucan branching enzyme GlgB"/>
    <property type="match status" value="1"/>
</dbReference>
<dbReference type="FunFam" id="3.20.20.80:FF:000003">
    <property type="entry name" value="1,4-alpha-glucan branching enzyme GlgB"/>
    <property type="match status" value="1"/>
</dbReference>
<dbReference type="Gene3D" id="3.20.20.80">
    <property type="entry name" value="Glycosidases"/>
    <property type="match status" value="1"/>
</dbReference>
<dbReference type="Gene3D" id="2.60.40.1180">
    <property type="entry name" value="Golgi alpha-mannosidase II"/>
    <property type="match status" value="1"/>
</dbReference>
<dbReference type="Gene3D" id="2.60.40.10">
    <property type="entry name" value="Immunoglobulins"/>
    <property type="match status" value="2"/>
</dbReference>
<dbReference type="HAMAP" id="MF_00685">
    <property type="entry name" value="GlgB"/>
    <property type="match status" value="1"/>
</dbReference>
<dbReference type="InterPro" id="IPR006048">
    <property type="entry name" value="A-amylase/branching_C"/>
</dbReference>
<dbReference type="InterPro" id="IPR037439">
    <property type="entry name" value="Branching_enzy"/>
</dbReference>
<dbReference type="InterPro" id="IPR006407">
    <property type="entry name" value="GlgB"/>
</dbReference>
<dbReference type="InterPro" id="IPR054169">
    <property type="entry name" value="GlgB_N"/>
</dbReference>
<dbReference type="InterPro" id="IPR044143">
    <property type="entry name" value="GlgB_N_E_set_prok"/>
</dbReference>
<dbReference type="InterPro" id="IPR006047">
    <property type="entry name" value="Glyco_hydro_13_cat_dom"/>
</dbReference>
<dbReference type="InterPro" id="IPR004193">
    <property type="entry name" value="Glyco_hydro_13_N"/>
</dbReference>
<dbReference type="InterPro" id="IPR013780">
    <property type="entry name" value="Glyco_hydro_b"/>
</dbReference>
<dbReference type="InterPro" id="IPR017853">
    <property type="entry name" value="Glycoside_hydrolase_SF"/>
</dbReference>
<dbReference type="InterPro" id="IPR013783">
    <property type="entry name" value="Ig-like_fold"/>
</dbReference>
<dbReference type="InterPro" id="IPR014756">
    <property type="entry name" value="Ig_E-set"/>
</dbReference>
<dbReference type="NCBIfam" id="TIGR01515">
    <property type="entry name" value="branching_enzym"/>
    <property type="match status" value="1"/>
</dbReference>
<dbReference type="NCBIfam" id="NF003811">
    <property type="entry name" value="PRK05402.1"/>
    <property type="match status" value="1"/>
</dbReference>
<dbReference type="NCBIfam" id="NF008967">
    <property type="entry name" value="PRK12313.1"/>
    <property type="match status" value="1"/>
</dbReference>
<dbReference type="PANTHER" id="PTHR43651">
    <property type="entry name" value="1,4-ALPHA-GLUCAN-BRANCHING ENZYME"/>
    <property type="match status" value="1"/>
</dbReference>
<dbReference type="PANTHER" id="PTHR43651:SF3">
    <property type="entry name" value="1,4-ALPHA-GLUCAN-BRANCHING ENZYME"/>
    <property type="match status" value="1"/>
</dbReference>
<dbReference type="Pfam" id="PF00128">
    <property type="entry name" value="Alpha-amylase"/>
    <property type="match status" value="2"/>
</dbReference>
<dbReference type="Pfam" id="PF02806">
    <property type="entry name" value="Alpha-amylase_C"/>
    <property type="match status" value="1"/>
</dbReference>
<dbReference type="Pfam" id="PF02922">
    <property type="entry name" value="CBM_48"/>
    <property type="match status" value="1"/>
</dbReference>
<dbReference type="Pfam" id="PF22019">
    <property type="entry name" value="GlgB_N"/>
    <property type="match status" value="1"/>
</dbReference>
<dbReference type="PIRSF" id="PIRSF000463">
    <property type="entry name" value="GlgB"/>
    <property type="match status" value="1"/>
</dbReference>
<dbReference type="SMART" id="SM00642">
    <property type="entry name" value="Aamy"/>
    <property type="match status" value="1"/>
</dbReference>
<dbReference type="SUPFAM" id="SSF51445">
    <property type="entry name" value="(Trans)glycosidases"/>
    <property type="match status" value="1"/>
</dbReference>
<dbReference type="SUPFAM" id="SSF81296">
    <property type="entry name" value="E set domains"/>
    <property type="match status" value="1"/>
</dbReference>
<dbReference type="SUPFAM" id="SSF51011">
    <property type="entry name" value="Glycosyl hydrolase domain"/>
    <property type="match status" value="1"/>
</dbReference>
<reference key="1">
    <citation type="journal article" date="2004" name="Proc. Natl. Acad. Sci. U.S.A.">
        <title>The complete genomic sequence of Nocardia farcinica IFM 10152.</title>
        <authorList>
            <person name="Ishikawa J."/>
            <person name="Yamashita A."/>
            <person name="Mikami Y."/>
            <person name="Hoshino Y."/>
            <person name="Kurita H."/>
            <person name="Hotta K."/>
            <person name="Shiba T."/>
            <person name="Hattori M."/>
        </authorList>
    </citation>
    <scope>NUCLEOTIDE SEQUENCE [LARGE SCALE GENOMIC DNA]</scope>
    <source>
        <strain>IFM 10152</strain>
    </source>
</reference>
<keyword id="KW-0119">Carbohydrate metabolism</keyword>
<keyword id="KW-0320">Glycogen biosynthesis</keyword>
<keyword id="KW-0321">Glycogen metabolism</keyword>
<keyword id="KW-0328">Glycosyltransferase</keyword>
<keyword id="KW-1185">Reference proteome</keyword>
<keyword id="KW-0808">Transferase</keyword>
<proteinExistence type="inferred from homology"/>
<sequence length="744" mass="82575">MSGPEDPADRRHGEVPAPRRDIPRPLVERRDLMLLAAGTHRDPHTVLGAHPHPDGTVVRVLRPHAAKVSVRVGGVDHPLDSVGYGVFAAVLPHPELMDYRIVTEYPGGPTVIAADGFRFLPTLGELDLHLIGEGRHEHLWHVLGAHPRRYTTLDGPVSGTSFAVWAPNARGVTVIGDFDGWSGNTAPMRALGTSGVWEVFVPDVGSGTKYKYRVHGADGRVVDHADPLAFATELPPATASVVTGSDYTWQDAQWLERRRSTDPTRSPMSVYEVHLGSWRPGLGYRELAEQLADYVRAAGYTHVELLPVAEHPFGGSWGYQVTSYYAPTARFGSPDDFRAFVDHLHGAGIGVLLDWVPAHFPRDEWALARFDGTPLYEHPDPRRGEQLDWGTYVFDFGRNEVRNFLVANARFWIEEFHIDGLRVDAVASMLYLDYSRGENWEPNIHGGRENLEAVAFLRELNDVVHRAHPGVVTIAEESTTWPGVTRGTEVGGLGFTMKWNMGWMHDTLGFLARDPIHRSWHHNEITFSLVYAWSENYVLPISHDEVVHGKGTLWTRMPGDDFAKAAGVRALLAYMWAHPGKQLLFMGQDFGQFREWSHDRGLDWGELDNPLHRGIATAVRDLNRVYRATPALWSQDTTPGGYAWIEADDRDRNVLAFLRYGSDGSTVACVFNFSGALHGEYRVGLPIAGEWTEILNTDAADYGGSGVGNYGVVRTEEIPWHGRPVSATVALAPNSAVWLAAPRA</sequence>
<gene>
    <name evidence="1" type="primary">glgB</name>
    <name type="ordered locus">NFA_10780</name>
</gene>
<comment type="function">
    <text evidence="1">Catalyzes the formation of the alpha-1,6-glucosidic linkages in glycogen by scission of a 1,4-alpha-linked oligosaccharide from growing alpha-1,4-glucan chains and the subsequent attachment of the oligosaccharide to the alpha-1,6 position.</text>
</comment>
<comment type="catalytic activity">
    <reaction evidence="1">
        <text>Transfers a segment of a (1-&gt;4)-alpha-D-glucan chain to a primary hydroxy group in a similar glucan chain.</text>
        <dbReference type="EC" id="2.4.1.18"/>
    </reaction>
</comment>
<comment type="pathway">
    <text evidence="1">Glycan biosynthesis; glycogen biosynthesis.</text>
</comment>
<comment type="subunit">
    <text evidence="1">Monomer.</text>
</comment>
<comment type="similarity">
    <text evidence="1">Belongs to the glycosyl hydrolase 13 family. GlgB subfamily.</text>
</comment>
<organism>
    <name type="scientific">Nocardia farcinica (strain IFM 10152)</name>
    <dbReference type="NCBI Taxonomy" id="247156"/>
    <lineage>
        <taxon>Bacteria</taxon>
        <taxon>Bacillati</taxon>
        <taxon>Actinomycetota</taxon>
        <taxon>Actinomycetes</taxon>
        <taxon>Mycobacteriales</taxon>
        <taxon>Nocardiaceae</taxon>
        <taxon>Nocardia</taxon>
    </lineage>
</organism>
<evidence type="ECO:0000255" key="1">
    <source>
        <dbReference type="HAMAP-Rule" id="MF_00685"/>
    </source>
</evidence>
<evidence type="ECO:0000256" key="2">
    <source>
        <dbReference type="SAM" id="MobiDB-lite"/>
    </source>
</evidence>
<feature type="chain" id="PRO_0000188721" description="1,4-alpha-glucan branching enzyme GlgB">
    <location>
        <begin position="1"/>
        <end position="744"/>
    </location>
</feature>
<feature type="region of interest" description="Disordered" evidence="2">
    <location>
        <begin position="1"/>
        <end position="23"/>
    </location>
</feature>
<feature type="compositionally biased region" description="Basic and acidic residues" evidence="2">
    <location>
        <begin position="7"/>
        <end position="23"/>
    </location>
</feature>
<feature type="active site" description="Nucleophile" evidence="1">
    <location>
        <position position="424"/>
    </location>
</feature>
<feature type="active site" description="Proton donor" evidence="1">
    <location>
        <position position="476"/>
    </location>
</feature>